<accession>B4P8E0</accession>
<feature type="signal peptide" evidence="3">
    <location>
        <begin position="1"/>
        <end position="22"/>
    </location>
</feature>
<feature type="chain" id="PRO_0000384148" description="L-asparaginase-like protein GE13669">
    <location>
        <begin position="23"/>
        <end position="399"/>
    </location>
</feature>
<feature type="disulfide bond" evidence="2">
    <location>
        <begin position="90"/>
        <end position="95"/>
    </location>
</feature>
<feature type="disulfide bond" evidence="2">
    <location>
        <begin position="189"/>
        <end position="205"/>
    </location>
</feature>
<feature type="disulfide bond" evidence="1">
    <location>
        <begin position="344"/>
        <end position="371"/>
    </location>
</feature>
<dbReference type="EMBL" id="CM000158">
    <property type="protein sequence ID" value="EDW91180.1"/>
    <property type="molecule type" value="Genomic_DNA"/>
</dbReference>
<dbReference type="SMR" id="B4P8E0"/>
<dbReference type="EnsemblMetazoa" id="FBtr0260187">
    <property type="protein sequence ID" value="FBpp0258679"/>
    <property type="gene ID" value="FBgn0231326"/>
</dbReference>
<dbReference type="EnsemblMetazoa" id="XM_002091432.4">
    <property type="protein sequence ID" value="XP_002091468.1"/>
    <property type="gene ID" value="LOC6530555"/>
</dbReference>
<dbReference type="GeneID" id="6530555"/>
<dbReference type="KEGG" id="dya:Dyak_GE13669"/>
<dbReference type="eggNOG" id="KOG1593">
    <property type="taxonomic scope" value="Eukaryota"/>
</dbReference>
<dbReference type="HOGENOM" id="CLU_021603_0_0_1"/>
<dbReference type="OMA" id="QAVIQGC"/>
<dbReference type="OrthoDB" id="188713at2759"/>
<dbReference type="PhylomeDB" id="B4P8E0"/>
<dbReference type="Proteomes" id="UP000002282">
    <property type="component" value="Chromosome 2R"/>
</dbReference>
<dbReference type="GO" id="GO:0005764">
    <property type="term" value="C:lysosome"/>
    <property type="evidence" value="ECO:0007669"/>
    <property type="project" value="TreeGrafter"/>
</dbReference>
<dbReference type="GO" id="GO:0003948">
    <property type="term" value="F:N4-(beta-N-acetylglucosaminyl)-L-asparaginase activity"/>
    <property type="evidence" value="ECO:0007669"/>
    <property type="project" value="TreeGrafter"/>
</dbReference>
<dbReference type="CDD" id="cd04513">
    <property type="entry name" value="Glycosylasparaginase"/>
    <property type="match status" value="1"/>
</dbReference>
<dbReference type="Gene3D" id="3.60.20.30">
    <property type="entry name" value="(Glycosyl)asparaginase"/>
    <property type="match status" value="1"/>
</dbReference>
<dbReference type="InterPro" id="IPR029055">
    <property type="entry name" value="Ntn_hydrolases_N"/>
</dbReference>
<dbReference type="InterPro" id="IPR000246">
    <property type="entry name" value="Peptidase_T2"/>
</dbReference>
<dbReference type="PANTHER" id="PTHR10188">
    <property type="entry name" value="L-ASPARAGINASE"/>
    <property type="match status" value="1"/>
</dbReference>
<dbReference type="PANTHER" id="PTHR10188:SF6">
    <property type="entry name" value="N(4)-(BETA-N-ACETYLGLUCOSAMINYL)-L-ASPARAGINASE"/>
    <property type="match status" value="1"/>
</dbReference>
<dbReference type="Pfam" id="PF01112">
    <property type="entry name" value="Asparaginase_2"/>
    <property type="match status" value="1"/>
</dbReference>
<dbReference type="SUPFAM" id="SSF56235">
    <property type="entry name" value="N-terminal nucleophile aminohydrolases (Ntn hydrolases)"/>
    <property type="match status" value="1"/>
</dbReference>
<keyword id="KW-1015">Disulfide bond</keyword>
<keyword id="KW-0732">Signal</keyword>
<comment type="similarity">
    <text evidence="3">Belongs to the Ntn-hydrolase family.</text>
</comment>
<sequence>MLAQSCCLRLLILLLLFKSTCSVREKSQKYFKNRKLRERRIKLYGTKKTEIQPLLISTWNYTDANLQAWSVLQQGPRRTRMAVMQGCMACQNQRCGRLLAGGSSPDSEGTLTLEAAIMDGEHLEYGAVAAMEGARNAILVADAVLRYTKHSVLVGKSATKFARSLGYKEEFLTDGRTKSVWKKWRSNGCQPNFWRDVRPPPTENCGPYTPLPEHLHQHPMHQEYAITQGQHDQLAFLALDAEGKFHVASQSSGAQFRIPGRVGDAAVPGAGIYADNDVGGAVASGDGDVLMRHLPAFLAVEAMRAGKRPDQAAKWVVQRLLRHNTEFNGAVVVVNRRGIYAAACAGLDEFHFVVSGGKGYLIMARVERIKCLERESEVVDDGPKGLFPTIPEKQAVPRG</sequence>
<evidence type="ECO:0000250" key="1"/>
<evidence type="ECO:0000250" key="2">
    <source>
        <dbReference type="UniProtKB" id="P20933"/>
    </source>
</evidence>
<evidence type="ECO:0000255" key="3"/>
<evidence type="ECO:0000312" key="4">
    <source>
        <dbReference type="EMBL" id="EDW91180.1"/>
    </source>
</evidence>
<name>ASPG2_DROYA</name>
<reference evidence="4" key="1">
    <citation type="journal article" date="2007" name="Nature">
        <title>Evolution of genes and genomes on the Drosophila phylogeny.</title>
        <authorList>
            <consortium name="Drosophila 12 genomes consortium"/>
        </authorList>
    </citation>
    <scope>NUCLEOTIDE SEQUENCE [LARGE SCALE GENOMIC DNA]</scope>
    <source>
        <strain evidence="4">Tai18E2 / Tucson 14021-0261.01</strain>
    </source>
</reference>
<proteinExistence type="inferred from homology"/>
<gene>
    <name type="ORF">GE13669</name>
</gene>
<organism>
    <name type="scientific">Drosophila yakuba</name>
    <name type="common">Fruit fly</name>
    <dbReference type="NCBI Taxonomy" id="7245"/>
    <lineage>
        <taxon>Eukaryota</taxon>
        <taxon>Metazoa</taxon>
        <taxon>Ecdysozoa</taxon>
        <taxon>Arthropoda</taxon>
        <taxon>Hexapoda</taxon>
        <taxon>Insecta</taxon>
        <taxon>Pterygota</taxon>
        <taxon>Neoptera</taxon>
        <taxon>Endopterygota</taxon>
        <taxon>Diptera</taxon>
        <taxon>Brachycera</taxon>
        <taxon>Muscomorpha</taxon>
        <taxon>Ephydroidea</taxon>
        <taxon>Drosophilidae</taxon>
        <taxon>Drosophila</taxon>
        <taxon>Sophophora</taxon>
    </lineage>
</organism>
<protein>
    <recommendedName>
        <fullName>L-asparaginase-like protein GE13669</fullName>
    </recommendedName>
</protein>